<feature type="chain" id="PRO_1000201365" description="Carboxy-S-adenosyl-L-methionine synthase">
    <location>
        <begin position="1"/>
        <end position="247"/>
    </location>
</feature>
<feature type="binding site" evidence="1">
    <location>
        <position position="39"/>
    </location>
    <ligand>
        <name>S-adenosyl-L-methionine</name>
        <dbReference type="ChEBI" id="CHEBI:59789"/>
    </ligand>
</feature>
<feature type="binding site" evidence="1">
    <location>
        <begin position="64"/>
        <end position="66"/>
    </location>
    <ligand>
        <name>S-adenosyl-L-methionine</name>
        <dbReference type="ChEBI" id="CHEBI:59789"/>
    </ligand>
</feature>
<feature type="binding site" evidence="1">
    <location>
        <begin position="89"/>
        <end position="90"/>
    </location>
    <ligand>
        <name>S-adenosyl-L-methionine</name>
        <dbReference type="ChEBI" id="CHEBI:59789"/>
    </ligand>
</feature>
<feature type="binding site" evidence="1">
    <location>
        <begin position="117"/>
        <end position="118"/>
    </location>
    <ligand>
        <name>S-adenosyl-L-methionine</name>
        <dbReference type="ChEBI" id="CHEBI:59789"/>
    </ligand>
</feature>
<feature type="binding site" evidence="1">
    <location>
        <position position="132"/>
    </location>
    <ligand>
        <name>S-adenosyl-L-methionine</name>
        <dbReference type="ChEBI" id="CHEBI:59789"/>
    </ligand>
</feature>
<feature type="binding site" evidence="1">
    <location>
        <position position="199"/>
    </location>
    <ligand>
        <name>S-adenosyl-L-methionine</name>
        <dbReference type="ChEBI" id="CHEBI:59789"/>
    </ligand>
</feature>
<reference key="1">
    <citation type="journal article" date="2011" name="J. Bacteriol.">
        <title>Comparative genomics of 28 Salmonella enterica isolates: evidence for CRISPR-mediated adaptive sublineage evolution.</title>
        <authorList>
            <person name="Fricke W.F."/>
            <person name="Mammel M.K."/>
            <person name="McDermott P.F."/>
            <person name="Tartera C."/>
            <person name="White D.G."/>
            <person name="Leclerc J.E."/>
            <person name="Ravel J."/>
            <person name="Cebula T.A."/>
        </authorList>
    </citation>
    <scope>NUCLEOTIDE SEQUENCE [LARGE SCALE GENOMIC DNA]</scope>
    <source>
        <strain>SL476</strain>
    </source>
</reference>
<accession>B4T803</accession>
<gene>
    <name evidence="1" type="primary">cmoA</name>
    <name type="ordered locus">SeHA_C2119</name>
</gene>
<dbReference type="EC" id="2.1.3.-" evidence="1"/>
<dbReference type="EMBL" id="CP001120">
    <property type="protein sequence ID" value="ACF68344.1"/>
    <property type="molecule type" value="Genomic_DNA"/>
</dbReference>
<dbReference type="RefSeq" id="WP_000019607.1">
    <property type="nucleotide sequence ID" value="NC_011083.1"/>
</dbReference>
<dbReference type="SMR" id="B4T803"/>
<dbReference type="KEGG" id="seh:SeHA_C2119"/>
<dbReference type="HOGENOM" id="CLU_078475_0_0_6"/>
<dbReference type="Proteomes" id="UP000001866">
    <property type="component" value="Chromosome"/>
</dbReference>
<dbReference type="GO" id="GO:0016743">
    <property type="term" value="F:carboxyl- or carbamoyltransferase activity"/>
    <property type="evidence" value="ECO:0007669"/>
    <property type="project" value="UniProtKB-UniRule"/>
</dbReference>
<dbReference type="GO" id="GO:1904047">
    <property type="term" value="F:S-adenosyl-L-methionine binding"/>
    <property type="evidence" value="ECO:0007669"/>
    <property type="project" value="UniProtKB-UniRule"/>
</dbReference>
<dbReference type="GO" id="GO:0002098">
    <property type="term" value="P:tRNA wobble uridine modification"/>
    <property type="evidence" value="ECO:0007669"/>
    <property type="project" value="InterPro"/>
</dbReference>
<dbReference type="CDD" id="cd02440">
    <property type="entry name" value="AdoMet_MTases"/>
    <property type="match status" value="1"/>
</dbReference>
<dbReference type="FunFam" id="3.40.50.150:FF:000030">
    <property type="entry name" value="Carboxy-S-adenosyl-L-methionine synthase"/>
    <property type="match status" value="1"/>
</dbReference>
<dbReference type="Gene3D" id="3.40.50.150">
    <property type="entry name" value="Vaccinia Virus protein VP39"/>
    <property type="match status" value="1"/>
</dbReference>
<dbReference type="HAMAP" id="MF_01589">
    <property type="entry name" value="Cx_SAM_synthase"/>
    <property type="match status" value="1"/>
</dbReference>
<dbReference type="InterPro" id="IPR005271">
    <property type="entry name" value="CmoA"/>
</dbReference>
<dbReference type="InterPro" id="IPR041698">
    <property type="entry name" value="Methyltransf_25"/>
</dbReference>
<dbReference type="InterPro" id="IPR029063">
    <property type="entry name" value="SAM-dependent_MTases_sf"/>
</dbReference>
<dbReference type="NCBIfam" id="TIGR00740">
    <property type="entry name" value="carboxy-S-adenosyl-L-methionine synthase CmoA"/>
    <property type="match status" value="1"/>
</dbReference>
<dbReference type="NCBIfam" id="NF011995">
    <property type="entry name" value="PRK15451.1"/>
    <property type="match status" value="1"/>
</dbReference>
<dbReference type="PANTHER" id="PTHR43861:SF2">
    <property type="entry name" value="CARBOXY-S-ADENOSYL-L-METHIONINE SYNTHASE"/>
    <property type="match status" value="1"/>
</dbReference>
<dbReference type="PANTHER" id="PTHR43861">
    <property type="entry name" value="TRANS-ACONITATE 2-METHYLTRANSFERASE-RELATED"/>
    <property type="match status" value="1"/>
</dbReference>
<dbReference type="Pfam" id="PF13649">
    <property type="entry name" value="Methyltransf_25"/>
    <property type="match status" value="1"/>
</dbReference>
<dbReference type="PIRSF" id="PIRSF006325">
    <property type="entry name" value="MeTrfase_bac"/>
    <property type="match status" value="1"/>
</dbReference>
<dbReference type="SUPFAM" id="SSF53335">
    <property type="entry name" value="S-adenosyl-L-methionine-dependent methyltransferases"/>
    <property type="match status" value="1"/>
</dbReference>
<protein>
    <recommendedName>
        <fullName evidence="1">Carboxy-S-adenosyl-L-methionine synthase</fullName>
        <shortName evidence="1">Cx-SAM synthase</shortName>
        <ecNumber evidence="1">2.1.3.-</ecNumber>
    </recommendedName>
</protein>
<name>CMOA_SALHS</name>
<organism>
    <name type="scientific">Salmonella heidelberg (strain SL476)</name>
    <dbReference type="NCBI Taxonomy" id="454169"/>
    <lineage>
        <taxon>Bacteria</taxon>
        <taxon>Pseudomonadati</taxon>
        <taxon>Pseudomonadota</taxon>
        <taxon>Gammaproteobacteria</taxon>
        <taxon>Enterobacterales</taxon>
        <taxon>Enterobacteriaceae</taxon>
        <taxon>Salmonella</taxon>
    </lineage>
</organism>
<evidence type="ECO:0000255" key="1">
    <source>
        <dbReference type="HAMAP-Rule" id="MF_01589"/>
    </source>
</evidence>
<sequence length="247" mass="27848">MSHRDTLFSAPIARLGDWTFDERVAEVFPDMIQRSVPGYSNIISMIGMLAERFVQPNTQVYDLGCSLGAATLSVRRNIRHEHCRIIAVDNSPAMIERCRRHIDAYKAPTPVEVVEGDIRDITIENASMVVLNFTLQFLEPAERQALLDKIYLGLNPGGALVLSEKFSFEDAKVGELLFNMHHDFKRANGYSELEISQKRSMLENVMLTDSVETHKARLRKAGFEHSELWFQCFNFGSLVALKAGVAA</sequence>
<keyword id="KW-0949">S-adenosyl-L-methionine</keyword>
<keyword id="KW-0808">Transferase</keyword>
<comment type="function">
    <text evidence="1">Catalyzes the conversion of S-adenosyl-L-methionine (SAM) to carboxy-S-adenosyl-L-methionine (Cx-SAM).</text>
</comment>
<comment type="catalytic activity">
    <reaction evidence="1">
        <text>prephenate + S-adenosyl-L-methionine = carboxy-S-adenosyl-L-methionine + 3-phenylpyruvate + H2O</text>
        <dbReference type="Rhea" id="RHEA:51692"/>
        <dbReference type="ChEBI" id="CHEBI:15377"/>
        <dbReference type="ChEBI" id="CHEBI:18005"/>
        <dbReference type="ChEBI" id="CHEBI:29934"/>
        <dbReference type="ChEBI" id="CHEBI:59789"/>
        <dbReference type="ChEBI" id="CHEBI:134278"/>
    </reaction>
</comment>
<comment type="subunit">
    <text evidence="1">Homodimer.</text>
</comment>
<comment type="similarity">
    <text evidence="1">Belongs to the class I-like SAM-binding methyltransferase superfamily. Cx-SAM synthase family.</text>
</comment>
<proteinExistence type="inferred from homology"/>